<feature type="chain" id="PRO_0000110911" description="Aspartate--tRNA(Asp/Asn) ligase">
    <location>
        <begin position="1"/>
        <end position="593"/>
    </location>
</feature>
<feature type="region of interest" description="Aspartate" evidence="1">
    <location>
        <begin position="196"/>
        <end position="199"/>
    </location>
</feature>
<feature type="binding site" evidence="1">
    <location>
        <position position="172"/>
    </location>
    <ligand>
        <name>L-aspartate</name>
        <dbReference type="ChEBI" id="CHEBI:29991"/>
    </ligand>
</feature>
<feature type="binding site" evidence="1">
    <location>
        <begin position="218"/>
        <end position="220"/>
    </location>
    <ligand>
        <name>ATP</name>
        <dbReference type="ChEBI" id="CHEBI:30616"/>
    </ligand>
</feature>
<feature type="binding site" evidence="1">
    <location>
        <position position="218"/>
    </location>
    <ligand>
        <name>L-aspartate</name>
        <dbReference type="ChEBI" id="CHEBI:29991"/>
    </ligand>
</feature>
<feature type="binding site" evidence="1">
    <location>
        <position position="227"/>
    </location>
    <ligand>
        <name>ATP</name>
        <dbReference type="ChEBI" id="CHEBI:30616"/>
    </ligand>
</feature>
<feature type="binding site" evidence="1">
    <location>
        <position position="450"/>
    </location>
    <ligand>
        <name>L-aspartate</name>
        <dbReference type="ChEBI" id="CHEBI:29991"/>
    </ligand>
</feature>
<feature type="binding site" evidence="1">
    <location>
        <position position="484"/>
    </location>
    <ligand>
        <name>ATP</name>
        <dbReference type="ChEBI" id="CHEBI:30616"/>
    </ligand>
</feature>
<feature type="binding site" evidence="1">
    <location>
        <position position="491"/>
    </location>
    <ligand>
        <name>L-aspartate</name>
        <dbReference type="ChEBI" id="CHEBI:29991"/>
    </ligand>
</feature>
<feature type="binding site" evidence="1">
    <location>
        <begin position="536"/>
        <end position="539"/>
    </location>
    <ligand>
        <name>ATP</name>
        <dbReference type="ChEBI" id="CHEBI:30616"/>
    </ligand>
</feature>
<feature type="site" description="Important for tRNA non-discrimination" evidence="1">
    <location>
        <position position="30"/>
    </location>
</feature>
<feature type="site" description="Important for tRNA non-discrimination" evidence="1">
    <location>
        <position position="81"/>
    </location>
</feature>
<comment type="function">
    <text evidence="1">Aspartyl-tRNA synthetase with relaxed tRNA specificity since it is able to aspartylate not only its cognate tRNA(Asp) but also tRNA(Asn). Reaction proceeds in two steps: L-aspartate is first activated by ATP to form Asp-AMP and then transferred to the acceptor end of tRNA(Asp/Asn).</text>
</comment>
<comment type="catalytic activity">
    <reaction evidence="1">
        <text>tRNA(Asx) + L-aspartate + ATP = L-aspartyl-tRNA(Asx) + AMP + diphosphate</text>
        <dbReference type="Rhea" id="RHEA:18349"/>
        <dbReference type="Rhea" id="RHEA-COMP:9710"/>
        <dbReference type="Rhea" id="RHEA-COMP:9711"/>
        <dbReference type="ChEBI" id="CHEBI:29991"/>
        <dbReference type="ChEBI" id="CHEBI:30616"/>
        <dbReference type="ChEBI" id="CHEBI:33019"/>
        <dbReference type="ChEBI" id="CHEBI:78442"/>
        <dbReference type="ChEBI" id="CHEBI:78516"/>
        <dbReference type="ChEBI" id="CHEBI:456215"/>
        <dbReference type="EC" id="6.1.1.23"/>
    </reaction>
</comment>
<comment type="subunit">
    <text evidence="1">Homodimer.</text>
</comment>
<comment type="subcellular location">
    <subcellularLocation>
        <location evidence="1">Cytoplasm</location>
    </subcellularLocation>
</comment>
<comment type="similarity">
    <text evidence="1">Belongs to the class-II aminoacyl-tRNA synthetase family. Type 1 subfamily.</text>
</comment>
<accession>Q82SQ5</accession>
<gene>
    <name evidence="1" type="primary">aspS</name>
    <name type="ordered locus">NE2252</name>
</gene>
<sequence length="593" mass="67120">MRTDYCGAINTRHLDKTITLCGWVHRRRDHGGVIFIDLRDREGIVQIVCDPDNVAAFQIAEKIRSEFVLAITGTVRHRPEGTVNHGILSGEIEVLVNAIEILNPSLTPPFQMDDDNLSEAIRLEYRYLDLRRPVMQRNIRLRHQVTMAVRIFLDQHGFIDVETPMLTKSTPEGARDYLVPSRVNAGHFFALPQSPQLFKQLLMVSGFDRYYQITRCFRDEDLRADRQPEFTQIDIETSFLPENEIMGMMEDMIRRLFASVLDISLPDPFPRLSYADAMFLYGSDKPDLRVPLVLTELTDLMQDVPFQVFRDAAQKAGGRVAALRVPGGGELSRKEIDEYTQFVGIYGAKGLAYIKINDLTKGIEGLQSPILKFLPESVVQSILERTQAQNGDLVFFGADKAKVVNDALGALRVKIGHERNLATDSWQPLWVVDFPMFEWDEEEKRWQALHHPFTSPSQGHEDFLTSDPGKALSRAYDMVLNGMEIGGGSIRIHRQDIQSKVFQALNISDDEAKLKFGFLLDALQYGAPPHGGIAFGLDRIVAMMTGADSIRDVIAFPKTQRAQCLLTQAPGAVEEKQLRELHIRLRRTENTNN</sequence>
<name>SYDND_NITEU</name>
<keyword id="KW-0030">Aminoacyl-tRNA synthetase</keyword>
<keyword id="KW-0067">ATP-binding</keyword>
<keyword id="KW-0963">Cytoplasm</keyword>
<keyword id="KW-0436">Ligase</keyword>
<keyword id="KW-0547">Nucleotide-binding</keyword>
<keyword id="KW-0648">Protein biosynthesis</keyword>
<keyword id="KW-1185">Reference proteome</keyword>
<organism>
    <name type="scientific">Nitrosomonas europaea (strain ATCC 19718 / CIP 103999 / KCTC 2705 / NBRC 14298)</name>
    <dbReference type="NCBI Taxonomy" id="228410"/>
    <lineage>
        <taxon>Bacteria</taxon>
        <taxon>Pseudomonadati</taxon>
        <taxon>Pseudomonadota</taxon>
        <taxon>Betaproteobacteria</taxon>
        <taxon>Nitrosomonadales</taxon>
        <taxon>Nitrosomonadaceae</taxon>
        <taxon>Nitrosomonas</taxon>
    </lineage>
</organism>
<evidence type="ECO:0000255" key="1">
    <source>
        <dbReference type="HAMAP-Rule" id="MF_00044"/>
    </source>
</evidence>
<protein>
    <recommendedName>
        <fullName evidence="1">Aspartate--tRNA(Asp/Asn) ligase</fullName>
        <ecNumber evidence="1">6.1.1.23</ecNumber>
    </recommendedName>
    <alternativeName>
        <fullName evidence="1">Aspartyl-tRNA synthetase</fullName>
        <shortName evidence="1">AspRS</shortName>
    </alternativeName>
    <alternativeName>
        <fullName evidence="1">Non-discriminating aspartyl-tRNA synthetase</fullName>
        <shortName evidence="1">ND-AspRS</shortName>
    </alternativeName>
</protein>
<proteinExistence type="inferred from homology"/>
<dbReference type="EC" id="6.1.1.23" evidence="1"/>
<dbReference type="EMBL" id="AL954747">
    <property type="protein sequence ID" value="CAD86164.1"/>
    <property type="molecule type" value="Genomic_DNA"/>
</dbReference>
<dbReference type="RefSeq" id="WP_011112743.1">
    <property type="nucleotide sequence ID" value="NC_004757.1"/>
</dbReference>
<dbReference type="SMR" id="Q82SQ5"/>
<dbReference type="STRING" id="228410.NE2252"/>
<dbReference type="GeneID" id="87105387"/>
<dbReference type="KEGG" id="neu:NE2252"/>
<dbReference type="eggNOG" id="COG0173">
    <property type="taxonomic scope" value="Bacteria"/>
</dbReference>
<dbReference type="HOGENOM" id="CLU_014330_3_2_4"/>
<dbReference type="OrthoDB" id="9802326at2"/>
<dbReference type="PhylomeDB" id="Q82SQ5"/>
<dbReference type="Proteomes" id="UP000001416">
    <property type="component" value="Chromosome"/>
</dbReference>
<dbReference type="GO" id="GO:0005737">
    <property type="term" value="C:cytoplasm"/>
    <property type="evidence" value="ECO:0007669"/>
    <property type="project" value="UniProtKB-SubCell"/>
</dbReference>
<dbReference type="GO" id="GO:0004815">
    <property type="term" value="F:aspartate-tRNA ligase activity"/>
    <property type="evidence" value="ECO:0007669"/>
    <property type="project" value="UniProtKB-UniRule"/>
</dbReference>
<dbReference type="GO" id="GO:0050560">
    <property type="term" value="F:aspartate-tRNA(Asn) ligase activity"/>
    <property type="evidence" value="ECO:0007669"/>
    <property type="project" value="UniProtKB-EC"/>
</dbReference>
<dbReference type="GO" id="GO:0005524">
    <property type="term" value="F:ATP binding"/>
    <property type="evidence" value="ECO:0007669"/>
    <property type="project" value="UniProtKB-UniRule"/>
</dbReference>
<dbReference type="GO" id="GO:0003676">
    <property type="term" value="F:nucleic acid binding"/>
    <property type="evidence" value="ECO:0007669"/>
    <property type="project" value="InterPro"/>
</dbReference>
<dbReference type="GO" id="GO:0006422">
    <property type="term" value="P:aspartyl-tRNA aminoacylation"/>
    <property type="evidence" value="ECO:0007669"/>
    <property type="project" value="UniProtKB-UniRule"/>
</dbReference>
<dbReference type="CDD" id="cd00777">
    <property type="entry name" value="AspRS_core"/>
    <property type="match status" value="1"/>
</dbReference>
<dbReference type="CDD" id="cd04317">
    <property type="entry name" value="EcAspRS_like_N"/>
    <property type="match status" value="1"/>
</dbReference>
<dbReference type="Gene3D" id="3.30.930.10">
    <property type="entry name" value="Bira Bifunctional Protein, Domain 2"/>
    <property type="match status" value="1"/>
</dbReference>
<dbReference type="Gene3D" id="3.30.1360.30">
    <property type="entry name" value="GAD-like domain"/>
    <property type="match status" value="1"/>
</dbReference>
<dbReference type="Gene3D" id="2.40.50.140">
    <property type="entry name" value="Nucleic acid-binding proteins"/>
    <property type="match status" value="1"/>
</dbReference>
<dbReference type="HAMAP" id="MF_00044">
    <property type="entry name" value="Asp_tRNA_synth_type1"/>
    <property type="match status" value="1"/>
</dbReference>
<dbReference type="InterPro" id="IPR004364">
    <property type="entry name" value="Aa-tRNA-synt_II"/>
</dbReference>
<dbReference type="InterPro" id="IPR006195">
    <property type="entry name" value="aa-tRNA-synth_II"/>
</dbReference>
<dbReference type="InterPro" id="IPR045864">
    <property type="entry name" value="aa-tRNA-synth_II/BPL/LPL"/>
</dbReference>
<dbReference type="InterPro" id="IPR004524">
    <property type="entry name" value="Asp-tRNA-ligase_1"/>
</dbReference>
<dbReference type="InterPro" id="IPR047089">
    <property type="entry name" value="Asp-tRNA-ligase_1_N"/>
</dbReference>
<dbReference type="InterPro" id="IPR002312">
    <property type="entry name" value="Asp/Asn-tRNA-synth_IIb"/>
</dbReference>
<dbReference type="InterPro" id="IPR047090">
    <property type="entry name" value="AspRS_core"/>
</dbReference>
<dbReference type="InterPro" id="IPR004115">
    <property type="entry name" value="GAD-like_sf"/>
</dbReference>
<dbReference type="InterPro" id="IPR029351">
    <property type="entry name" value="GAD_dom"/>
</dbReference>
<dbReference type="InterPro" id="IPR012340">
    <property type="entry name" value="NA-bd_OB-fold"/>
</dbReference>
<dbReference type="InterPro" id="IPR004365">
    <property type="entry name" value="NA-bd_OB_tRNA"/>
</dbReference>
<dbReference type="NCBIfam" id="TIGR00459">
    <property type="entry name" value="aspS_bact"/>
    <property type="match status" value="1"/>
</dbReference>
<dbReference type="NCBIfam" id="NF001750">
    <property type="entry name" value="PRK00476.1"/>
    <property type="match status" value="1"/>
</dbReference>
<dbReference type="PANTHER" id="PTHR22594:SF5">
    <property type="entry name" value="ASPARTATE--TRNA LIGASE, MITOCHONDRIAL"/>
    <property type="match status" value="1"/>
</dbReference>
<dbReference type="PANTHER" id="PTHR22594">
    <property type="entry name" value="ASPARTYL/LYSYL-TRNA SYNTHETASE"/>
    <property type="match status" value="1"/>
</dbReference>
<dbReference type="Pfam" id="PF02938">
    <property type="entry name" value="GAD"/>
    <property type="match status" value="1"/>
</dbReference>
<dbReference type="Pfam" id="PF00152">
    <property type="entry name" value="tRNA-synt_2"/>
    <property type="match status" value="1"/>
</dbReference>
<dbReference type="Pfam" id="PF01336">
    <property type="entry name" value="tRNA_anti-codon"/>
    <property type="match status" value="1"/>
</dbReference>
<dbReference type="PRINTS" id="PR01042">
    <property type="entry name" value="TRNASYNTHASP"/>
</dbReference>
<dbReference type="SUPFAM" id="SSF55681">
    <property type="entry name" value="Class II aaRS and biotin synthetases"/>
    <property type="match status" value="1"/>
</dbReference>
<dbReference type="SUPFAM" id="SSF55261">
    <property type="entry name" value="GAD domain-like"/>
    <property type="match status" value="1"/>
</dbReference>
<dbReference type="SUPFAM" id="SSF50249">
    <property type="entry name" value="Nucleic acid-binding proteins"/>
    <property type="match status" value="1"/>
</dbReference>
<dbReference type="PROSITE" id="PS50862">
    <property type="entry name" value="AA_TRNA_LIGASE_II"/>
    <property type="match status" value="1"/>
</dbReference>
<reference key="1">
    <citation type="journal article" date="2003" name="J. Bacteriol.">
        <title>Complete genome sequence of the ammonia-oxidizing bacterium and obligate chemolithoautotroph Nitrosomonas europaea.</title>
        <authorList>
            <person name="Chain P."/>
            <person name="Lamerdin J.E."/>
            <person name="Larimer F.W."/>
            <person name="Regala W."/>
            <person name="Lao V."/>
            <person name="Land M.L."/>
            <person name="Hauser L."/>
            <person name="Hooper A.B."/>
            <person name="Klotz M.G."/>
            <person name="Norton J."/>
            <person name="Sayavedra-Soto L.A."/>
            <person name="Arciero D.M."/>
            <person name="Hommes N.G."/>
            <person name="Whittaker M.M."/>
            <person name="Arp D.J."/>
        </authorList>
    </citation>
    <scope>NUCLEOTIDE SEQUENCE [LARGE SCALE GENOMIC DNA]</scope>
    <source>
        <strain>ATCC 19718 / CIP 103999 / KCTC 2705 / NBRC 14298</strain>
    </source>
</reference>